<dbReference type="EMBL" id="U15969">
    <property type="protein sequence ID" value="AAA91622.1"/>
    <property type="molecule type" value="Genomic_DNA"/>
</dbReference>
<dbReference type="PIR" id="JC4268">
    <property type="entry name" value="JC4268"/>
</dbReference>
<dbReference type="SMR" id="P48803"/>
<dbReference type="FunCoup" id="P48803">
    <property type="interactions" value="1"/>
</dbReference>
<dbReference type="STRING" id="9913.ENSBTAP00000029936"/>
<dbReference type="PaxDb" id="9913-ENSBTAP00000029936"/>
<dbReference type="eggNOG" id="KOG3885">
    <property type="taxonomic scope" value="Eukaryota"/>
</dbReference>
<dbReference type="InParanoid" id="P48803"/>
<dbReference type="Proteomes" id="UP000009136">
    <property type="component" value="Unplaced"/>
</dbReference>
<dbReference type="GO" id="GO:0005737">
    <property type="term" value="C:cytoplasm"/>
    <property type="evidence" value="ECO:0000318"/>
    <property type="project" value="GO_Central"/>
</dbReference>
<dbReference type="GO" id="GO:0005615">
    <property type="term" value="C:extracellular space"/>
    <property type="evidence" value="ECO:0000318"/>
    <property type="project" value="GO_Central"/>
</dbReference>
<dbReference type="GO" id="GO:0005104">
    <property type="term" value="F:fibroblast growth factor receptor binding"/>
    <property type="evidence" value="ECO:0000318"/>
    <property type="project" value="GO_Central"/>
</dbReference>
<dbReference type="GO" id="GO:0008083">
    <property type="term" value="F:growth factor activity"/>
    <property type="evidence" value="ECO:0000318"/>
    <property type="project" value="GO_Central"/>
</dbReference>
<dbReference type="GO" id="GO:0008543">
    <property type="term" value="P:fibroblast growth factor receptor signaling pathway"/>
    <property type="evidence" value="ECO:0000318"/>
    <property type="project" value="GO_Central"/>
</dbReference>
<dbReference type="GO" id="GO:0022008">
    <property type="term" value="P:neurogenesis"/>
    <property type="evidence" value="ECO:0000318"/>
    <property type="project" value="GO_Central"/>
</dbReference>
<dbReference type="GO" id="GO:0051781">
    <property type="term" value="P:positive regulation of cell division"/>
    <property type="evidence" value="ECO:0007669"/>
    <property type="project" value="UniProtKB-KW"/>
</dbReference>
<dbReference type="GO" id="GO:0008284">
    <property type="term" value="P:positive regulation of cell population proliferation"/>
    <property type="evidence" value="ECO:0000318"/>
    <property type="project" value="GO_Central"/>
</dbReference>
<dbReference type="GO" id="GO:0043410">
    <property type="term" value="P:positive regulation of MAPK cascade"/>
    <property type="evidence" value="ECO:0000318"/>
    <property type="project" value="GO_Central"/>
</dbReference>
<dbReference type="GO" id="GO:0030334">
    <property type="term" value="P:regulation of cell migration"/>
    <property type="evidence" value="ECO:0000318"/>
    <property type="project" value="GO_Central"/>
</dbReference>
<dbReference type="CDD" id="cd23316">
    <property type="entry name" value="beta-trefoil_FGF4"/>
    <property type="match status" value="1"/>
</dbReference>
<dbReference type="FunFam" id="2.80.10.50:FF:000033">
    <property type="entry name" value="Fibroblast growth factor"/>
    <property type="match status" value="1"/>
</dbReference>
<dbReference type="Gene3D" id="2.80.10.50">
    <property type="match status" value="1"/>
</dbReference>
<dbReference type="InterPro" id="IPR002209">
    <property type="entry name" value="Fibroblast_GF_fam"/>
</dbReference>
<dbReference type="InterPro" id="IPR008996">
    <property type="entry name" value="IL1/FGF"/>
</dbReference>
<dbReference type="PANTHER" id="PTHR11486">
    <property type="entry name" value="FIBROBLAST GROWTH FACTOR"/>
    <property type="match status" value="1"/>
</dbReference>
<dbReference type="Pfam" id="PF00167">
    <property type="entry name" value="FGF"/>
    <property type="match status" value="1"/>
</dbReference>
<dbReference type="PRINTS" id="PR00263">
    <property type="entry name" value="HBGFFGF"/>
</dbReference>
<dbReference type="PRINTS" id="PR00262">
    <property type="entry name" value="IL1HBGF"/>
</dbReference>
<dbReference type="SMART" id="SM00442">
    <property type="entry name" value="FGF"/>
    <property type="match status" value="1"/>
</dbReference>
<dbReference type="SUPFAM" id="SSF50353">
    <property type="entry name" value="Cytokine"/>
    <property type="match status" value="1"/>
</dbReference>
<dbReference type="PROSITE" id="PS00247">
    <property type="entry name" value="HBGF_FGF"/>
    <property type="match status" value="1"/>
</dbReference>
<sequence>MAGPGTAAAALLPAVLLAVLAPWAGRGGAAPTAPNGTLEAELERRWESLVARSLLAGLPVAAQPKEAAVQSGAGDYLLGIKRLRRLYCNVGIGFHLQVLPDGRIGGVHADTSDSLLELSPVERGVVSIFGVASRFFVAMSSRGRLYGSPFFTDECRFREILLPNNYNAYECDRHPGMFIALSKNGKAKKGNRVSPTMKVTHFLPRL</sequence>
<evidence type="ECO:0000250" key="1"/>
<evidence type="ECO:0000250" key="2">
    <source>
        <dbReference type="UniProtKB" id="P08620"/>
    </source>
</evidence>
<evidence type="ECO:0000250" key="3">
    <source>
        <dbReference type="UniProtKB" id="P11403"/>
    </source>
</evidence>
<evidence type="ECO:0000255" key="4"/>
<evidence type="ECO:0000303" key="5">
    <source>
    </source>
</evidence>
<evidence type="ECO:0000305" key="6"/>
<comment type="function">
    <text evidence="1 3">Plays an important role in the regulation of embryonic development, cell proliferation, and cell differentiation. Required for normal limb and cardiac valve development during embryogenesis (By similarity). May play a role in embryonic molar tooth bud development via inducing the expression of MSX1, MSX2 and MSX1-mediated expression of SDC1 in dental mesenchyme cells (By similarity).</text>
</comment>
<comment type="subunit">
    <text evidence="1">Interacts with FGFR1, FGFR2, FGFR3 and FGFR4. Affinity between fibroblast growth factors (FGFs) and their receptors is increased by heparan sulfate glycosaminoglycans that function as coreceptors (By similarity).</text>
</comment>
<comment type="subcellular location">
    <subcellularLocation>
        <location evidence="6">Secreted</location>
    </subcellularLocation>
</comment>
<comment type="similarity">
    <text evidence="6">Belongs to the heparin-binding growth factors family.</text>
</comment>
<reference key="1">
    <citation type="journal article" date="1995" name="Gene">
        <title>An unexpected transforming gene in calf-thymus carrier DNA: bovine hst.</title>
        <authorList>
            <person name="Yu J.C."/>
            <person name="Deseabra A.J."/>
            <person name="Wang L.M."/>
            <person name="Fleming T.P."/>
            <person name="Chedid M."/>
            <person name="Miki T."/>
            <person name="Heidaran M.A."/>
        </authorList>
    </citation>
    <scope>NUCLEOTIDE SEQUENCE [GENOMIC DNA]</scope>
    <source>
        <tissue>Thymus</tissue>
    </source>
</reference>
<name>FGF4_BOVIN</name>
<keyword id="KW-0217">Developmental protein</keyword>
<keyword id="KW-0221">Differentiation</keyword>
<keyword id="KW-0339">Growth factor</keyword>
<keyword id="KW-0497">Mitogen</keyword>
<keyword id="KW-0656">Proto-oncogene</keyword>
<keyword id="KW-1185">Reference proteome</keyword>
<keyword id="KW-0964">Secreted</keyword>
<keyword id="KW-0732">Signal</keyword>
<protein>
    <recommendedName>
        <fullName evidence="2">Fibroblast growth factor 4</fullName>
        <shortName evidence="3">FGF-4</shortName>
    </recommendedName>
    <alternativeName>
        <fullName evidence="2">Heparin secretory-transforming protein</fullName>
        <shortName evidence="5">HST</shortName>
    </alternativeName>
    <alternativeName>
        <fullName>Heparin-binding growth factor 4</fullName>
        <shortName evidence="2">HBGF-4</shortName>
    </alternativeName>
</protein>
<gene>
    <name evidence="2" type="primary">FGF4</name>
    <name evidence="5" type="synonym">HST</name>
</gene>
<proteinExistence type="inferred from homology"/>
<feature type="signal peptide" evidence="4">
    <location>
        <begin position="1"/>
        <end position="29"/>
    </location>
</feature>
<feature type="chain" id="PRO_0000008952" description="Fibroblast growth factor 4">
    <location>
        <begin position="30"/>
        <end position="206"/>
    </location>
</feature>
<accession>P48803</accession>
<organism>
    <name type="scientific">Bos taurus</name>
    <name type="common">Bovine</name>
    <dbReference type="NCBI Taxonomy" id="9913"/>
    <lineage>
        <taxon>Eukaryota</taxon>
        <taxon>Metazoa</taxon>
        <taxon>Chordata</taxon>
        <taxon>Craniata</taxon>
        <taxon>Vertebrata</taxon>
        <taxon>Euteleostomi</taxon>
        <taxon>Mammalia</taxon>
        <taxon>Eutheria</taxon>
        <taxon>Laurasiatheria</taxon>
        <taxon>Artiodactyla</taxon>
        <taxon>Ruminantia</taxon>
        <taxon>Pecora</taxon>
        <taxon>Bovidae</taxon>
        <taxon>Bovinae</taxon>
        <taxon>Bos</taxon>
    </lineage>
</organism>